<keyword id="KW-0085">Behavior</keyword>
<keyword id="KW-1003">Cell membrane</keyword>
<keyword id="KW-0325">Glycoprotein</keyword>
<keyword id="KW-0472">Membrane</keyword>
<keyword id="KW-0552">Olfaction</keyword>
<keyword id="KW-0675">Receptor</keyword>
<keyword id="KW-1185">Reference proteome</keyword>
<keyword id="KW-0716">Sensory transduction</keyword>
<keyword id="KW-0807">Transducer</keyword>
<keyword id="KW-0812">Transmembrane</keyword>
<keyword id="KW-1133">Transmembrane helix</keyword>
<comment type="function">
    <text evidence="1 6">Odorant coreceptor which complexes with conventional odorant receptors (ORs) to form odorant-sensing units, providing sensitive and prolonged odorant signaling and calcium permeability (By similarity). Obligate coreceptor of all odorant receptors (By similarity). Orco is a universal and integral part of the functional odorant receptor, involved in the dendritic localization of other olfactory receptors. Can form functional ion channels in the absence of an odor-binding odorant receptor (By similarity). Plays a central role in the perception of olfactory stimuli in ants and is essential for ant social organization (PubMed:28802042). Required for pheromone sensing (PubMed:28802042). Also required for the development and maintenance of odorant receptor neurons (ORNs) and of antennal lobe glomeruli (PubMed:28802042).</text>
</comment>
<comment type="subunit">
    <text evidence="1">Heterodimer with conventional odorant receptors (ORs).</text>
</comment>
<comment type="subcellular location">
    <subcellularLocation>
        <location evidence="8">Cell membrane</location>
        <topology evidence="2">Multi-pass membrane protein</topology>
    </subcellularLocation>
</comment>
<comment type="tissue specificity">
    <text evidence="6">Present in antennae (at protein level).</text>
</comment>
<comment type="disruption phenotype">
    <text evidence="6">Impaired behavior and fitness, probably due to loss of pheromone sensing. Ants also display gross neuroanatomical defects in the antennal lobe, with a dramatic decrease in the number of antennal lobe glomeruli.</text>
</comment>
<comment type="miscellaneous">
    <text evidence="6">In contrast to other ant species, C.biroi ants reproduce via parthenogenesis, enabling stable germline modifications from the clonal progeny of injected individuals without laboratory crosses.</text>
</comment>
<comment type="similarity">
    <text evidence="8">Belongs to the insect chemoreceptor superfamily. Heteromeric odorant receptor channel (TC 1.A.69) family. Orco subfamily.</text>
</comment>
<comment type="online information" name="Protein Spotlight">
    <link uri="https://www.proteinspotlight.org/back_issues/197/"/>
    <text>Whispers - Issue 197 of November 2017</text>
</comment>
<sequence length="478" mass="54109">MMKMKQQGLVADLLPNIRVMKTFGHFVFNYYNDNSSKYLHKVYCCVNLFMLLLQFGLCAVNLIVESADVDDLTANTITLLFFTHSIVKICYFAIRSKYFYRTWAIWNNPNSHPLFAESNARYHAIALKKMRLLLFLVGGTTMLAAVAWTVLTFFEHPIRKIVDPVTNETEIIELPQLLIRSFYPFDAGKGITHVLVLVYQFYWVLFMLIDANSLDVLFCSWLLFACEQLQHLKQIMKPLMELSATLDTVVPNSSELFKAGSADHLRDGDNPPPPPPPQSDNMLDLDLRNIYSNRQDFTATFRPTAGMTFNGGVGPNGLTKKQEALVRSAIKYWVERHKHIVRLVTAVGDAYGFALLLHMLTTTITLTLLAYQATKVNGINVYAASTIGYILYTFGQVFLFCIFGNRLIEESTSVMEAAYSCHWYDGSEEAKTFVQIVCQQCQKAMSISGAKFFTVSLDLFASVLGAVVTYFMVLVQLK</sequence>
<organism>
    <name type="scientific">Ooceraea biroi</name>
    <name type="common">Clonal raider ant</name>
    <name type="synonym">Cerapachys biroi</name>
    <dbReference type="NCBI Taxonomy" id="2015173"/>
    <lineage>
        <taxon>Eukaryota</taxon>
        <taxon>Metazoa</taxon>
        <taxon>Ecdysozoa</taxon>
        <taxon>Arthropoda</taxon>
        <taxon>Hexapoda</taxon>
        <taxon>Insecta</taxon>
        <taxon>Pterygota</taxon>
        <taxon>Neoptera</taxon>
        <taxon>Endopterygota</taxon>
        <taxon>Hymenoptera</taxon>
        <taxon>Apocrita</taxon>
        <taxon>Aculeata</taxon>
        <taxon>Formicoidea</taxon>
        <taxon>Formicidae</taxon>
        <taxon>Dorylinae</taxon>
        <taxon>Ooceraea</taxon>
    </lineage>
</organism>
<evidence type="ECO:0000250" key="1">
    <source>
        <dbReference type="UniProtKB" id="Q7QCC7"/>
    </source>
</evidence>
<evidence type="ECO:0000255" key="2"/>
<evidence type="ECO:0000255" key="3">
    <source>
        <dbReference type="PROSITE-ProRule" id="PRU00498"/>
    </source>
</evidence>
<evidence type="ECO:0000255" key="4">
    <source>
        <dbReference type="RuleBase" id="RU351113"/>
    </source>
</evidence>
<evidence type="ECO:0000256" key="5">
    <source>
        <dbReference type="SAM" id="MobiDB-lite"/>
    </source>
</evidence>
<evidence type="ECO:0000269" key="6">
    <source>
    </source>
</evidence>
<evidence type="ECO:0000303" key="7">
    <source>
    </source>
</evidence>
<evidence type="ECO:0000305" key="8"/>
<evidence type="ECO:0000312" key="9">
    <source>
        <dbReference type="EMBL" id="EZA49341.1"/>
    </source>
</evidence>
<proteinExistence type="evidence at protein level"/>
<reference key="1">
    <citation type="journal article" date="2014" name="Curr. Biol.">
        <title>The genome of the clonal raider ant Cerapachys biroi.</title>
        <authorList>
            <person name="Oxley P.R."/>
            <person name="Ji L."/>
            <person name="Fetter-Pruneda I."/>
            <person name="McKenzie S.K."/>
            <person name="Li C."/>
            <person name="Hu H."/>
            <person name="Zhang G."/>
            <person name="Kronauer D.J."/>
        </authorList>
    </citation>
    <scope>NUCLEOTIDE SEQUENCE [LARGE SCALE GENOMIC DNA]</scope>
</reference>
<reference key="2">
    <citation type="journal article" date="2017" name="Cell">
        <title>Orco mutagenesis causes loss of antennal lobe glomeruli and impaired social behavior in ants.</title>
        <authorList>
            <person name="Trible W."/>
            <person name="Olivos-Cisneros L."/>
            <person name="McKenzie S.K."/>
            <person name="Saragosti J."/>
            <person name="Chang N.C."/>
            <person name="Matthews B.J."/>
            <person name="Oxley P.R."/>
            <person name="Kronauer D.J.C."/>
        </authorList>
    </citation>
    <scope>FUNCTION</scope>
    <scope>TISSUE SPECIFICITY</scope>
    <scope>DISRUPTION PHENOTYPE</scope>
</reference>
<accession>A0A026W182</accession>
<gene>
    <name evidence="7" type="primary">Orco</name>
    <name evidence="9" type="ORF">X777_12371</name>
</gene>
<feature type="chain" id="PRO_0000442003" description="Odorant receptor coreceptor">
    <location>
        <begin position="1"/>
        <end position="478"/>
    </location>
</feature>
<feature type="topological domain" description="Cytoplasmic" evidence="8">
    <location>
        <begin position="1"/>
        <end position="43"/>
    </location>
</feature>
<feature type="transmembrane region" description="Helical; Name=1" evidence="2">
    <location>
        <begin position="44"/>
        <end position="64"/>
    </location>
</feature>
<feature type="topological domain" description="Extracellular" evidence="8">
    <location>
        <begin position="65"/>
        <end position="73"/>
    </location>
</feature>
<feature type="transmembrane region" description="Helical; Name=2" evidence="2">
    <location>
        <begin position="74"/>
        <end position="94"/>
    </location>
</feature>
<feature type="topological domain" description="Cytoplasmic" evidence="8">
    <location>
        <begin position="95"/>
        <end position="133"/>
    </location>
</feature>
<feature type="transmembrane region" description="Helical; Name=3" evidence="2">
    <location>
        <begin position="134"/>
        <end position="154"/>
    </location>
</feature>
<feature type="topological domain" description="Extracellular" evidence="8">
    <location>
        <begin position="155"/>
        <end position="190"/>
    </location>
</feature>
<feature type="transmembrane region" description="Helical; Name=4" evidence="2">
    <location>
        <begin position="191"/>
        <end position="211"/>
    </location>
</feature>
<feature type="topological domain" description="Cytoplasmic" evidence="8">
    <location>
        <begin position="212"/>
        <end position="349"/>
    </location>
</feature>
<feature type="transmembrane region" description="Helical; Name=5" evidence="2">
    <location>
        <begin position="350"/>
        <end position="370"/>
    </location>
</feature>
<feature type="topological domain" description="Extracellular" evidence="8">
    <location>
        <begin position="371"/>
        <end position="382"/>
    </location>
</feature>
<feature type="transmembrane region" description="Helical; Name=6" evidence="2">
    <location>
        <begin position="383"/>
        <end position="403"/>
    </location>
</feature>
<feature type="topological domain" description="Cytoplasmic" evidence="8">
    <location>
        <begin position="404"/>
        <end position="454"/>
    </location>
</feature>
<feature type="transmembrane region" description="Helical; Name=7" evidence="2">
    <location>
        <begin position="455"/>
        <end position="475"/>
    </location>
</feature>
<feature type="topological domain" description="Extracellular" evidence="8">
    <location>
        <begin position="476"/>
        <end position="478"/>
    </location>
</feature>
<feature type="region of interest" description="Disordered" evidence="5">
    <location>
        <begin position="261"/>
        <end position="281"/>
    </location>
</feature>
<feature type="glycosylation site" description="N-linked (GlcNAc...) asparagine" evidence="3">
    <location>
        <position position="167"/>
    </location>
</feature>
<name>ORCO_OOCBI</name>
<protein>
    <recommendedName>
        <fullName evidence="4">Odorant receptor coreceptor</fullName>
    </recommendedName>
</protein>
<dbReference type="EMBL" id="KK107522">
    <property type="protein sequence ID" value="EZA49341.1"/>
    <property type="molecule type" value="Genomic_DNA"/>
</dbReference>
<dbReference type="SMR" id="A0A026W182"/>
<dbReference type="STRING" id="2015173.A0A026W182"/>
<dbReference type="GlyCosmos" id="A0A026W182">
    <property type="glycosylation" value="1 site, No reported glycans"/>
</dbReference>
<dbReference type="EnsemblMetazoa" id="XM_011348552.2">
    <property type="protein sequence ID" value="XP_011346854.1"/>
    <property type="gene ID" value="LOC105284785"/>
</dbReference>
<dbReference type="OMA" id="VERHKHI"/>
<dbReference type="OrthoDB" id="8175157at2759"/>
<dbReference type="Proteomes" id="UP000053097">
    <property type="component" value="Unassembled WGS sequence"/>
</dbReference>
<dbReference type="GO" id="GO:0005886">
    <property type="term" value="C:plasma membrane"/>
    <property type="evidence" value="ECO:0007669"/>
    <property type="project" value="UniProtKB-SubCell"/>
</dbReference>
<dbReference type="GO" id="GO:0005549">
    <property type="term" value="F:odorant binding"/>
    <property type="evidence" value="ECO:0007669"/>
    <property type="project" value="InterPro"/>
</dbReference>
<dbReference type="GO" id="GO:0004984">
    <property type="term" value="F:olfactory receptor activity"/>
    <property type="evidence" value="ECO:0000315"/>
    <property type="project" value="UniProtKB"/>
</dbReference>
<dbReference type="GO" id="GO:0007469">
    <property type="term" value="P:antennal development"/>
    <property type="evidence" value="ECO:0000315"/>
    <property type="project" value="UniProtKB"/>
</dbReference>
<dbReference type="GO" id="GO:0050911">
    <property type="term" value="P:detection of chemical stimulus involved in sensory perception of smell"/>
    <property type="evidence" value="ECO:0000315"/>
    <property type="project" value="UniProtKB"/>
</dbReference>
<dbReference type="GO" id="GO:0043695">
    <property type="term" value="P:detection of pheromone"/>
    <property type="evidence" value="ECO:0000315"/>
    <property type="project" value="UniProtKB"/>
</dbReference>
<dbReference type="GO" id="GO:0042048">
    <property type="term" value="P:olfactory behavior"/>
    <property type="evidence" value="ECO:0000315"/>
    <property type="project" value="UniProtKB"/>
</dbReference>
<dbReference type="GO" id="GO:0019236">
    <property type="term" value="P:response to pheromone"/>
    <property type="evidence" value="ECO:0000315"/>
    <property type="project" value="UniProtKB"/>
</dbReference>
<dbReference type="GO" id="GO:0007165">
    <property type="term" value="P:signal transduction"/>
    <property type="evidence" value="ECO:0007669"/>
    <property type="project" value="UniProtKB-KW"/>
</dbReference>
<dbReference type="GO" id="GO:0035176">
    <property type="term" value="P:social behavior"/>
    <property type="evidence" value="ECO:0000315"/>
    <property type="project" value="UniProtKB"/>
</dbReference>
<dbReference type="InterPro" id="IPR004117">
    <property type="entry name" value="7tm6_olfct_rcpt"/>
</dbReference>
<dbReference type="PANTHER" id="PTHR21137">
    <property type="entry name" value="ODORANT RECEPTOR"/>
    <property type="match status" value="1"/>
</dbReference>
<dbReference type="PANTHER" id="PTHR21137:SF9">
    <property type="entry name" value="ODORANT RECEPTOR CORECEPTOR"/>
    <property type="match status" value="1"/>
</dbReference>
<dbReference type="Pfam" id="PF02949">
    <property type="entry name" value="7tm_6"/>
    <property type="match status" value="1"/>
</dbReference>